<name>IF1_CLAM3</name>
<gene>
    <name evidence="1" type="primary">infA</name>
    <name type="ordered locus">CMM_2588</name>
</gene>
<feature type="chain" id="PRO_0000338800" description="Translation initiation factor IF-1">
    <location>
        <begin position="1"/>
        <end position="73"/>
    </location>
</feature>
<feature type="domain" description="S1-like" evidence="1">
    <location>
        <begin position="1"/>
        <end position="73"/>
    </location>
</feature>
<comment type="function">
    <text evidence="1">One of the essential components for the initiation of protein synthesis. Stabilizes the binding of IF-2 and IF-3 on the 30S subunit to which N-formylmethionyl-tRNA(fMet) subsequently binds. Helps modulate mRNA selection, yielding the 30S pre-initiation complex (PIC). Upon addition of the 50S ribosomal subunit IF-1, IF-2 and IF-3 are released leaving the mature 70S translation initiation complex.</text>
</comment>
<comment type="subunit">
    <text evidence="1">Component of the 30S ribosomal translation pre-initiation complex which assembles on the 30S ribosome in the order IF-2 and IF-3, IF-1 and N-formylmethionyl-tRNA(fMet); mRNA recruitment can occur at any time during PIC assembly.</text>
</comment>
<comment type="subcellular location">
    <subcellularLocation>
        <location evidence="1">Cytoplasm</location>
    </subcellularLocation>
</comment>
<comment type="similarity">
    <text evidence="1">Belongs to the IF-1 family.</text>
</comment>
<sequence>MAKKDGVIEIEGGVVEALPNAMFRVELSNGHKVLAHISGKMRQHYIRILPEDRVIVELSPYDLTRGRIVYRYK</sequence>
<evidence type="ECO:0000255" key="1">
    <source>
        <dbReference type="HAMAP-Rule" id="MF_00075"/>
    </source>
</evidence>
<organism>
    <name type="scientific">Clavibacter michiganensis subsp. michiganensis (strain NCPPB 382)</name>
    <dbReference type="NCBI Taxonomy" id="443906"/>
    <lineage>
        <taxon>Bacteria</taxon>
        <taxon>Bacillati</taxon>
        <taxon>Actinomycetota</taxon>
        <taxon>Actinomycetes</taxon>
        <taxon>Micrococcales</taxon>
        <taxon>Microbacteriaceae</taxon>
        <taxon>Clavibacter</taxon>
    </lineage>
</organism>
<reference key="1">
    <citation type="journal article" date="2008" name="J. Bacteriol.">
        <title>The genome sequence of the tomato-pathogenic actinomycete Clavibacter michiganensis subsp. michiganensis NCPPB382 reveals a large island involved in pathogenicity.</title>
        <authorList>
            <person name="Gartemann K.-H."/>
            <person name="Abt B."/>
            <person name="Bekel T."/>
            <person name="Burger A."/>
            <person name="Engemann J."/>
            <person name="Fluegel M."/>
            <person name="Gaigalat L."/>
            <person name="Goesmann A."/>
            <person name="Graefen I."/>
            <person name="Kalinowski J."/>
            <person name="Kaup O."/>
            <person name="Kirchner O."/>
            <person name="Krause L."/>
            <person name="Linke B."/>
            <person name="McHardy A."/>
            <person name="Meyer F."/>
            <person name="Pohle S."/>
            <person name="Rueckert C."/>
            <person name="Schneiker S."/>
            <person name="Zellermann E.-M."/>
            <person name="Puehler A."/>
            <person name="Eichenlaub R."/>
            <person name="Kaiser O."/>
            <person name="Bartels D."/>
        </authorList>
    </citation>
    <scope>NUCLEOTIDE SEQUENCE [LARGE SCALE GENOMIC DNA]</scope>
    <source>
        <strain>NCPPB 382</strain>
    </source>
</reference>
<dbReference type="EMBL" id="AM711867">
    <property type="protein sequence ID" value="CAN02671.1"/>
    <property type="molecule type" value="Genomic_DNA"/>
</dbReference>
<dbReference type="RefSeq" id="WP_012039277.1">
    <property type="nucleotide sequence ID" value="NC_009480.1"/>
</dbReference>
<dbReference type="SMR" id="A5CU84"/>
<dbReference type="GeneID" id="92984300"/>
<dbReference type="KEGG" id="cmi:CMM_2588"/>
<dbReference type="eggNOG" id="COG0361">
    <property type="taxonomic scope" value="Bacteria"/>
</dbReference>
<dbReference type="HOGENOM" id="CLU_151267_1_0_11"/>
<dbReference type="OrthoDB" id="9803250at2"/>
<dbReference type="Proteomes" id="UP000001564">
    <property type="component" value="Chromosome"/>
</dbReference>
<dbReference type="GO" id="GO:0005829">
    <property type="term" value="C:cytosol"/>
    <property type="evidence" value="ECO:0007669"/>
    <property type="project" value="TreeGrafter"/>
</dbReference>
<dbReference type="GO" id="GO:0043022">
    <property type="term" value="F:ribosome binding"/>
    <property type="evidence" value="ECO:0007669"/>
    <property type="project" value="UniProtKB-UniRule"/>
</dbReference>
<dbReference type="GO" id="GO:0019843">
    <property type="term" value="F:rRNA binding"/>
    <property type="evidence" value="ECO:0007669"/>
    <property type="project" value="UniProtKB-UniRule"/>
</dbReference>
<dbReference type="GO" id="GO:0003743">
    <property type="term" value="F:translation initiation factor activity"/>
    <property type="evidence" value="ECO:0007669"/>
    <property type="project" value="UniProtKB-UniRule"/>
</dbReference>
<dbReference type="CDD" id="cd04451">
    <property type="entry name" value="S1_IF1"/>
    <property type="match status" value="1"/>
</dbReference>
<dbReference type="FunFam" id="2.40.50.140:FF:000002">
    <property type="entry name" value="Translation initiation factor IF-1"/>
    <property type="match status" value="1"/>
</dbReference>
<dbReference type="Gene3D" id="2.40.50.140">
    <property type="entry name" value="Nucleic acid-binding proteins"/>
    <property type="match status" value="1"/>
</dbReference>
<dbReference type="HAMAP" id="MF_00075">
    <property type="entry name" value="IF_1"/>
    <property type="match status" value="1"/>
</dbReference>
<dbReference type="InterPro" id="IPR012340">
    <property type="entry name" value="NA-bd_OB-fold"/>
</dbReference>
<dbReference type="InterPro" id="IPR006196">
    <property type="entry name" value="RNA-binding_domain_S1_IF1"/>
</dbReference>
<dbReference type="InterPro" id="IPR004368">
    <property type="entry name" value="TIF_IF1"/>
</dbReference>
<dbReference type="NCBIfam" id="TIGR00008">
    <property type="entry name" value="infA"/>
    <property type="match status" value="1"/>
</dbReference>
<dbReference type="PANTHER" id="PTHR33370">
    <property type="entry name" value="TRANSLATION INITIATION FACTOR IF-1, CHLOROPLASTIC"/>
    <property type="match status" value="1"/>
</dbReference>
<dbReference type="PANTHER" id="PTHR33370:SF1">
    <property type="entry name" value="TRANSLATION INITIATION FACTOR IF-1, CHLOROPLASTIC"/>
    <property type="match status" value="1"/>
</dbReference>
<dbReference type="Pfam" id="PF01176">
    <property type="entry name" value="eIF-1a"/>
    <property type="match status" value="1"/>
</dbReference>
<dbReference type="SUPFAM" id="SSF50249">
    <property type="entry name" value="Nucleic acid-binding proteins"/>
    <property type="match status" value="1"/>
</dbReference>
<dbReference type="PROSITE" id="PS50832">
    <property type="entry name" value="S1_IF1_TYPE"/>
    <property type="match status" value="1"/>
</dbReference>
<accession>A5CU84</accession>
<proteinExistence type="inferred from homology"/>
<protein>
    <recommendedName>
        <fullName evidence="1">Translation initiation factor IF-1</fullName>
    </recommendedName>
</protein>
<keyword id="KW-0963">Cytoplasm</keyword>
<keyword id="KW-0396">Initiation factor</keyword>
<keyword id="KW-0648">Protein biosynthesis</keyword>
<keyword id="KW-0694">RNA-binding</keyword>
<keyword id="KW-0699">rRNA-binding</keyword>